<dbReference type="PDB" id="5UI2">
    <property type="method" value="X-ray"/>
    <property type="resolution" value="2.10 A"/>
    <property type="chains" value="A/B=1-317"/>
</dbReference>
<dbReference type="PDBsum" id="5UI2"/>
<dbReference type="SMR" id="P83689"/>
<dbReference type="DrugBank" id="DB02772">
    <property type="generic name" value="Sucrose"/>
</dbReference>
<dbReference type="GO" id="GO:0030089">
    <property type="term" value="C:phycobilisome"/>
    <property type="evidence" value="ECO:0007669"/>
    <property type="project" value="UniProtKB-KW"/>
</dbReference>
<dbReference type="GO" id="GO:0031676">
    <property type="term" value="C:plasma membrane-derived thylakoid membrane"/>
    <property type="evidence" value="ECO:0007669"/>
    <property type="project" value="UniProtKB-SubCell"/>
</dbReference>
<dbReference type="GO" id="GO:0031404">
    <property type="term" value="F:chloride ion binding"/>
    <property type="evidence" value="ECO:0007669"/>
    <property type="project" value="InterPro"/>
</dbReference>
<dbReference type="GO" id="GO:0009881">
    <property type="term" value="F:photoreceptor activity"/>
    <property type="evidence" value="ECO:0007669"/>
    <property type="project" value="UniProtKB-KW"/>
</dbReference>
<dbReference type="GO" id="GO:0016037">
    <property type="term" value="P:light absorption"/>
    <property type="evidence" value="ECO:0007669"/>
    <property type="project" value="InterPro"/>
</dbReference>
<dbReference type="Gene3D" id="3.10.450.50">
    <property type="match status" value="1"/>
</dbReference>
<dbReference type="Gene3D" id="1.10.2090.10">
    <property type="entry name" value="Orange carotenoid-binding protein, N-terminal domain"/>
    <property type="match status" value="1"/>
</dbReference>
<dbReference type="InterPro" id="IPR032710">
    <property type="entry name" value="NTF2-like_dom_sf"/>
</dbReference>
<dbReference type="InterPro" id="IPR002075">
    <property type="entry name" value="NTF2_dom"/>
</dbReference>
<dbReference type="InterPro" id="IPR015233">
    <property type="entry name" value="Orange_carotenoid-bd_N"/>
</dbReference>
<dbReference type="InterPro" id="IPR036917">
    <property type="entry name" value="Orange_carotenoid-bd_N_sf"/>
</dbReference>
<dbReference type="Pfam" id="PF09150">
    <property type="entry name" value="Carot_N"/>
    <property type="match status" value="1"/>
</dbReference>
<dbReference type="Pfam" id="PF02136">
    <property type="entry name" value="NTF2"/>
    <property type="match status" value="1"/>
</dbReference>
<dbReference type="SUPFAM" id="SSF54427">
    <property type="entry name" value="NTF2-like"/>
    <property type="match status" value="1"/>
</dbReference>
<dbReference type="SUPFAM" id="SSF81930">
    <property type="entry name" value="Orange carotenoid protein, N-terminal domain"/>
    <property type="match status" value="1"/>
</dbReference>
<dbReference type="PROSITE" id="PS51773">
    <property type="entry name" value="OCP_N"/>
    <property type="match status" value="1"/>
</dbReference>
<comment type="function">
    <text evidence="2 6">Acts as a blue-light photoreceptor and photo-protectant. Essential for inhibiting damaged induced by excess blue-green light via a process known as non-photochemical quenching (NPQ). Binding carotenoids improves OCP's intrinsic photoprotectant activity by broadening its absorption spectrum and facilitating the dissipation of absorbed energy (PubMed:15751975). In the dark or dim light the stable inactive form (OCP-O) is orange, upon illumination with blue-green light it converts to a metastable active red form (OCP-R), inducing energy dissipation, quenching cellular fluorescence via NPQ (By similarity).</text>
</comment>
<comment type="cofactor">
    <cofactor evidence="4">
        <name>3'-hydroxyechinenone</name>
        <dbReference type="ChEBI" id="CHEBI:80214"/>
    </cofactor>
    <text evidence="4 7">Binds 1 3'-hydroxyechinenone molecule per subunit.</text>
</comment>
<comment type="biophysicochemical properties">
    <absorption>
        <max evidence="5 8">494 nm</max>
        <text evidence="8">Also shows other maxima at 465 nm and 275 nm. The red form (RCP) shows a broad peak at 500 nm.</text>
    </absorption>
</comment>
<comment type="subunit">
    <text evidence="4 5">Homodimer.</text>
</comment>
<comment type="subcellular location">
    <subcellularLocation>
        <location evidence="2 5">Cellular thylakoid membrane</location>
        <topology evidence="10">Peripheral membrane protein</topology>
        <orientation evidence="10">Cytoplasmic side</orientation>
    </subcellularLocation>
    <text evidence="2">Associated with the phycobilisome.</text>
</comment>
<comment type="PTM">
    <text evidence="2 11">Proteolytically cleaved into a red 16.7 kDa form named red carotenoid-binding protein (RCP) which lacks 15 residues from the N-terminus and approximately 150 residues from the C-terminus.</text>
</comment>
<comment type="similarity">
    <text evidence="3 10">Belongs to the orange carotenoid-binding protein family.</text>
</comment>
<proteinExistence type="evidence at protein level"/>
<protein>
    <recommendedName>
        <fullName evidence="9">Orange carotenoid-binding protein</fullName>
        <shortName evidence="9">OCP</shortName>
    </recommendedName>
    <component>
        <recommendedName>
            <fullName>Red carotenoid-binding protein</fullName>
            <shortName>RCP</shortName>
        </recommendedName>
    </component>
</protein>
<name>OCP_LIMMA</name>
<organism>
    <name type="scientific">Limnospira maxima</name>
    <name type="common">Arthrospira maxima</name>
    <dbReference type="NCBI Taxonomy" id="129910"/>
    <lineage>
        <taxon>Bacteria</taxon>
        <taxon>Bacillati</taxon>
        <taxon>Cyanobacteriota</taxon>
        <taxon>Cyanophyceae</taxon>
        <taxon>Oscillatoriophycideae</taxon>
        <taxon>Oscillatoriales</taxon>
        <taxon>Sirenicapillariaceae</taxon>
        <taxon>Limnospira</taxon>
    </lineage>
</organism>
<accession>P83689</accession>
<evidence type="ECO:0000250" key="1"/>
<evidence type="ECO:0000250" key="2">
    <source>
        <dbReference type="UniProtKB" id="P74102"/>
    </source>
</evidence>
<evidence type="ECO:0000255" key="3">
    <source>
        <dbReference type="PROSITE-ProRule" id="PRU01109"/>
    </source>
</evidence>
<evidence type="ECO:0000269" key="4">
    <source>
    </source>
</evidence>
<evidence type="ECO:0000269" key="5">
    <source>
    </source>
</evidence>
<evidence type="ECO:0000269" key="6">
    <source>
    </source>
</evidence>
<evidence type="ECO:0000269" key="7">
    <source>
    </source>
</evidence>
<evidence type="ECO:0000269" key="8">
    <source ref="2"/>
</evidence>
<evidence type="ECO:0000303" key="9">
    <source>
    </source>
</evidence>
<evidence type="ECO:0000305" key="10"/>
<evidence type="ECO:0000305" key="11">
    <source>
    </source>
</evidence>
<evidence type="ECO:0000312" key="12">
    <source>
        <dbReference type="PDB" id="5UI2"/>
    </source>
</evidence>
<evidence type="ECO:0007744" key="13">
    <source>
        <dbReference type="PDB" id="5UI2"/>
    </source>
</evidence>
<evidence type="ECO:0007829" key="14">
    <source>
        <dbReference type="PDB" id="5UI2"/>
    </source>
</evidence>
<reference evidence="10" key="1">
    <citation type="journal article" date="1997" name="Biochim. Biophys. Acta">
        <title>The orange carotenoid protein of Synechocystis PCC 6803.</title>
        <authorList>
            <person name="Wu Y.P."/>
            <person name="Krogmann D.W."/>
        </authorList>
    </citation>
    <scope>PROTEIN SEQUENCE OF 2-29</scope>
    <scope>COFACTOR</scope>
    <scope>PROTEOLYTIC CLEAVAGE</scope>
</reference>
<reference evidence="10" key="2">
    <citation type="journal article" date="1981" name="Biochim. Biophys. Acta">
        <title>A carotenoid-protein from cyanobacteria.</title>
        <authorList>
            <person name="Holt T.K."/>
            <person name="Krogmann D.W."/>
        </authorList>
    </citation>
    <scope>BIOPHYSICOCHEMICAL PROPERTIES</scope>
    <scope>IDENTIFICATION OF CAROTENOID</scope>
    <scope>PROTEOLYTIC CLEAVAGE</scope>
</reference>
<reference evidence="10" key="3">
    <citation type="journal article" date="2004" name="Arch. Biochem. Biophys.">
        <title>Water-soluble carotenoid proteins of cyanobacteria.</title>
        <authorList>
            <person name="Kerfeld C.A."/>
        </authorList>
    </citation>
    <scope>REVIEW ON FUNCTION</scope>
    <scope>BIOPHYSICOCHEMICAL PROPERTIES</scope>
    <scope>SUBUNIT</scope>
    <scope>SUBCELLULAR LOCATION</scope>
    <scope>PROTEOLYTIC CLEAVAGE</scope>
</reference>
<reference evidence="10" key="4">
    <citation type="journal article" date="2005" name="Biochemistry">
        <title>Spectroscopic properties of the carotenoid 3'-hydroxyechinenone in the orange carotenoid protein from the cyanobacterium Arthrospira maxima.</title>
        <authorList>
            <person name="Polivka T."/>
            <person name="Kerfeld C.A."/>
            <person name="Pascher T."/>
            <person name="Sundstroem V."/>
        </authorList>
    </citation>
    <scope>FUNCTION</scope>
</reference>
<reference evidence="10" key="5">
    <citation type="journal article" date="1997" name="Acta Crystallogr. D">
        <title>Crystals of the carotenoid protein from Arthrospira maxima containing uniformly oriented pigment molecules.</title>
        <authorList>
            <person name="Kerfeld C.A."/>
            <person name="Wu Y.P."/>
            <person name="Chan C."/>
            <person name="Krogmann D.W."/>
            <person name="Yeates T.O."/>
        </authorList>
    </citation>
    <scope>CRYSTALLIZATION</scope>
</reference>
<reference evidence="10 12" key="6">
    <citation type="journal article" date="2003" name="Structure">
        <title>The crystal structure of a cyanobacterial water-soluble carotenoid binding protein.</title>
        <authorList>
            <person name="Kerfeld C.A."/>
            <person name="Sawaya M.R."/>
            <person name="Brahmandam V."/>
            <person name="Cascio D."/>
            <person name="Ho K.K."/>
            <person name="Trevithick-Sutton C.C."/>
            <person name="Krogmann D.W."/>
            <person name="Yeates T.O."/>
        </authorList>
    </citation>
    <scope>X-RAY CRYSTALLOGRAPHY (2.1 ANGSTROMS) IN COMPLEX WITH 3'-HYDROXYECHINENONE CAROTENOID</scope>
    <scope>COFACTOR</scope>
    <scope>SUBUNIT</scope>
</reference>
<sequence>MPFTIDTARSIFPETLAADVVPATIARFKQLSAEDQLALIWFAYLEMGKTITIAAPGAANMQFAENTLQEIRQMTPLQQTQAMCDLANRTDTPICRTYASWSPNIKLGFWYELGRFMDQGLVAPIPEGYKLSANANAILVTIQGIDPGQQITVLRNCVVDMGFDTSKLGSYQRVAEPVVPPQEMSQRTKVQIEGVTNSTVLQYMDNLNANDFDNLISLFAEDGALQPPFQKPIVGKENTLRFFREECQNLKLIPERGVSEPTEDGYTQIKVTGKVQTPWFGGNVGMNIAWRFLLNPENKVFFVAIDLLASPKELLNL</sequence>
<keyword id="KW-0002">3D-structure</keyword>
<keyword id="KW-0042">Antenna complex</keyword>
<keyword id="KW-0157">Chromophore</keyword>
<keyword id="KW-0903">Direct protein sequencing</keyword>
<keyword id="KW-0472">Membrane</keyword>
<keyword id="KW-0600">Photoreceptor protein</keyword>
<keyword id="KW-0605">Phycobilisome</keyword>
<keyword id="KW-0675">Receptor</keyword>
<keyword id="KW-0716">Sensory transduction</keyword>
<keyword id="KW-0793">Thylakoid</keyword>
<feature type="initiator methionine" description="Removed" evidence="7">
    <location>
        <position position="1"/>
    </location>
</feature>
<feature type="chain" id="PRO_0000282350" description="Orange carotenoid-binding protein" evidence="7">
    <location>
        <begin position="2"/>
        <end position="317"/>
    </location>
</feature>
<feature type="chain" id="PRO_0000282351" description="Red carotenoid-binding protein" evidence="1">
    <location>
        <begin position="16"/>
        <end status="unknown"/>
    </location>
</feature>
<feature type="domain" description="OCP N-terminal" evidence="3">
    <location>
        <begin position="18"/>
        <end position="169"/>
    </location>
</feature>
<feature type="binding site" evidence="4 13">
    <location>
        <position position="37"/>
    </location>
    <ligand>
        <name>3'-hydroxyechinenone</name>
        <dbReference type="ChEBI" id="CHEBI:80214"/>
    </ligand>
</feature>
<feature type="binding site" evidence="4 13">
    <location>
        <position position="203"/>
    </location>
    <ligand>
        <name>3'-hydroxyechinenone</name>
        <dbReference type="ChEBI" id="CHEBI:80214"/>
    </ligand>
</feature>
<feature type="binding site" evidence="4 13">
    <location>
        <position position="290"/>
    </location>
    <ligand>
        <name>3'-hydroxyechinenone</name>
        <dbReference type="ChEBI" id="CHEBI:80214"/>
    </ligand>
</feature>
<feature type="helix" evidence="14">
    <location>
        <begin position="5"/>
        <end position="8"/>
    </location>
</feature>
<feature type="helix" evidence="14">
    <location>
        <begin position="20"/>
        <end position="29"/>
    </location>
</feature>
<feature type="helix" evidence="14">
    <location>
        <begin position="33"/>
        <end position="48"/>
    </location>
</feature>
<feature type="helix" evidence="14">
    <location>
        <begin position="58"/>
        <end position="72"/>
    </location>
</feature>
<feature type="helix" evidence="14">
    <location>
        <begin position="76"/>
        <end position="88"/>
    </location>
</feature>
<feature type="helix" evidence="14">
    <location>
        <begin position="93"/>
        <end position="99"/>
    </location>
</feature>
<feature type="helix" evidence="14">
    <location>
        <begin position="103"/>
        <end position="118"/>
    </location>
</feature>
<feature type="helix" evidence="14">
    <location>
        <begin position="133"/>
        <end position="144"/>
    </location>
</feature>
<feature type="helix" evidence="14">
    <location>
        <begin position="147"/>
        <end position="159"/>
    </location>
</feature>
<feature type="helix" evidence="14">
    <location>
        <begin position="184"/>
        <end position="186"/>
    </location>
</feature>
<feature type="helix" evidence="14">
    <location>
        <begin position="198"/>
        <end position="208"/>
    </location>
</feature>
<feature type="helix" evidence="14">
    <location>
        <begin position="212"/>
        <end position="216"/>
    </location>
</feature>
<feature type="strand" evidence="14">
    <location>
        <begin position="219"/>
        <end position="226"/>
    </location>
</feature>
<feature type="strand" evidence="14">
    <location>
        <begin position="233"/>
        <end position="235"/>
    </location>
</feature>
<feature type="helix" evidence="14">
    <location>
        <begin position="236"/>
        <end position="246"/>
    </location>
</feature>
<feature type="strand" evidence="14">
    <location>
        <begin position="251"/>
        <end position="261"/>
    </location>
</feature>
<feature type="helix" evidence="14">
    <location>
        <begin position="263"/>
        <end position="265"/>
    </location>
</feature>
<feature type="strand" evidence="14">
    <location>
        <begin position="267"/>
        <end position="276"/>
    </location>
</feature>
<feature type="turn" evidence="14">
    <location>
        <begin position="278"/>
        <end position="280"/>
    </location>
</feature>
<feature type="helix" evidence="14">
    <location>
        <begin position="281"/>
        <end position="283"/>
    </location>
</feature>
<feature type="strand" evidence="14">
    <location>
        <begin position="286"/>
        <end position="294"/>
    </location>
</feature>
<feature type="strand" evidence="14">
    <location>
        <begin position="300"/>
        <end position="310"/>
    </location>
</feature>
<feature type="helix" evidence="14">
    <location>
        <begin position="311"/>
        <end position="315"/>
    </location>
</feature>